<sequence>MQERHTEQDYRALLIADTPIIDVRAPIEFEQGAMPAAINLPLMNNDERVAVGTCYKQQGSDAALALGHKLVAGEIRQQRMYAWRAACLQNPQGILCCARGGQRSHIVQSWLHAAGIDYPLVEGGYKALRQTTIQATIELAQKPIVLIGGCTGCGKTLLVQQQPNGVDLEGLARHRGSAFGRTLQPQLSQASFENLLAAEMLKTDARQNLRLWVLEDESRMIGSNHLPECLRERMTQAAIAVVEDPFEIRLERLNEEYFLRMHHDFTHAYGDEQGWQEYCEYLHHGLSAIKRRLGLQRYNELAARLDAALTTQLATGSTDGHLAWLVPLLKEYYDPMYRYQLEKKAEKVVFRGEWAEVAEWVKAR</sequence>
<evidence type="ECO:0000255" key="1">
    <source>
        <dbReference type="HAMAP-Rule" id="MF_01622"/>
    </source>
</evidence>
<proteinExistence type="inferred from homology"/>
<feature type="chain" id="PRO_1000069587" description="tRNA 2-selenouridine synthase">
    <location>
        <begin position="1"/>
        <end position="364"/>
    </location>
</feature>
<feature type="domain" description="Rhodanese" evidence="1">
    <location>
        <begin position="14"/>
        <end position="137"/>
    </location>
</feature>
<feature type="active site" description="S-selanylcysteine intermediate" evidence="1">
    <location>
        <position position="97"/>
    </location>
</feature>
<accession>A7ZIR0</accession>
<gene>
    <name evidence="1" type="primary">selU</name>
    <name type="ordered locus">EcE24377A_0540</name>
</gene>
<comment type="function">
    <text evidence="1">Involved in the post-transcriptional modification of the uridine at the wobble position (U34) of tRNA(Lys), tRNA(Glu) and tRNA(Gln). Catalyzes the conversion of 2-thiouridine (S2U-RNA) to 2-selenouridine (Se2U-RNA). Acts in a two-step process involving geranylation of 2-thiouridine (S2U) to S-geranyl-2-thiouridine (geS2U) and subsequent selenation of the latter derivative to 2-selenouridine (Se2U) in the tRNA chain.</text>
</comment>
<comment type="catalytic activity">
    <reaction evidence="1">
        <text>5-methylaminomethyl-2-thiouridine(34) in tRNA + selenophosphate + (2E)-geranyl diphosphate + H2O + H(+) = 5-methylaminomethyl-2-selenouridine(34) in tRNA + (2E)-thiogeraniol + phosphate + diphosphate</text>
        <dbReference type="Rhea" id="RHEA:42716"/>
        <dbReference type="Rhea" id="RHEA-COMP:10195"/>
        <dbReference type="Rhea" id="RHEA-COMP:10196"/>
        <dbReference type="ChEBI" id="CHEBI:15377"/>
        <dbReference type="ChEBI" id="CHEBI:15378"/>
        <dbReference type="ChEBI" id="CHEBI:16144"/>
        <dbReference type="ChEBI" id="CHEBI:33019"/>
        <dbReference type="ChEBI" id="CHEBI:43474"/>
        <dbReference type="ChEBI" id="CHEBI:58057"/>
        <dbReference type="ChEBI" id="CHEBI:74455"/>
        <dbReference type="ChEBI" id="CHEBI:82743"/>
        <dbReference type="ChEBI" id="CHEBI:143703"/>
        <dbReference type="EC" id="2.9.1.3"/>
    </reaction>
    <physiologicalReaction direction="left-to-right" evidence="1">
        <dbReference type="Rhea" id="RHEA:42717"/>
    </physiologicalReaction>
</comment>
<comment type="catalytic activity">
    <reaction evidence="1">
        <text>5-methylaminomethyl-2-thiouridine(34) in tRNA + (2E)-geranyl diphosphate = 5-methylaminomethyl-S-(2E)-geranyl-thiouridine(34) in tRNA + diphosphate</text>
        <dbReference type="Rhea" id="RHEA:14085"/>
        <dbReference type="Rhea" id="RHEA-COMP:10195"/>
        <dbReference type="Rhea" id="RHEA-COMP:14654"/>
        <dbReference type="ChEBI" id="CHEBI:33019"/>
        <dbReference type="ChEBI" id="CHEBI:58057"/>
        <dbReference type="ChEBI" id="CHEBI:74455"/>
        <dbReference type="ChEBI" id="CHEBI:140632"/>
    </reaction>
    <physiologicalReaction direction="left-to-right" evidence="1">
        <dbReference type="Rhea" id="RHEA:14086"/>
    </physiologicalReaction>
</comment>
<comment type="catalytic activity">
    <reaction evidence="1">
        <text>5-methylaminomethyl-S-(2E)-geranyl-thiouridine(34) in tRNA + selenophosphate + H(+) = 5-methylaminomethyl-2-(Se-phospho)selenouridine(34) in tRNA + (2E)-thiogeraniol</text>
        <dbReference type="Rhea" id="RHEA:60172"/>
        <dbReference type="Rhea" id="RHEA-COMP:14654"/>
        <dbReference type="Rhea" id="RHEA-COMP:15523"/>
        <dbReference type="ChEBI" id="CHEBI:15378"/>
        <dbReference type="ChEBI" id="CHEBI:16144"/>
        <dbReference type="ChEBI" id="CHEBI:140632"/>
        <dbReference type="ChEBI" id="CHEBI:143702"/>
        <dbReference type="ChEBI" id="CHEBI:143703"/>
    </reaction>
    <physiologicalReaction direction="left-to-right" evidence="1">
        <dbReference type="Rhea" id="RHEA:60173"/>
    </physiologicalReaction>
</comment>
<comment type="catalytic activity">
    <reaction evidence="1">
        <text>5-methylaminomethyl-2-(Se-phospho)selenouridine(34) in tRNA + H2O = 5-methylaminomethyl-2-selenouridine(34) in tRNA + phosphate</text>
        <dbReference type="Rhea" id="RHEA:60176"/>
        <dbReference type="Rhea" id="RHEA-COMP:10196"/>
        <dbReference type="Rhea" id="RHEA-COMP:15523"/>
        <dbReference type="ChEBI" id="CHEBI:15377"/>
        <dbReference type="ChEBI" id="CHEBI:43474"/>
        <dbReference type="ChEBI" id="CHEBI:82743"/>
        <dbReference type="ChEBI" id="CHEBI:143702"/>
    </reaction>
    <physiologicalReaction direction="left-to-right" evidence="1">
        <dbReference type="Rhea" id="RHEA:60177"/>
    </physiologicalReaction>
</comment>
<comment type="subunit">
    <text evidence="1">Monomer.</text>
</comment>
<comment type="similarity">
    <text evidence="1">Belongs to the SelU family.</text>
</comment>
<keyword id="KW-1185">Reference proteome</keyword>
<keyword id="KW-0711">Selenium</keyword>
<keyword id="KW-0808">Transferase</keyword>
<organism>
    <name type="scientific">Escherichia coli O139:H28 (strain E24377A / ETEC)</name>
    <dbReference type="NCBI Taxonomy" id="331111"/>
    <lineage>
        <taxon>Bacteria</taxon>
        <taxon>Pseudomonadati</taxon>
        <taxon>Pseudomonadota</taxon>
        <taxon>Gammaproteobacteria</taxon>
        <taxon>Enterobacterales</taxon>
        <taxon>Enterobacteriaceae</taxon>
        <taxon>Escherichia</taxon>
    </lineage>
</organism>
<dbReference type="EC" id="2.9.1.3" evidence="1"/>
<dbReference type="EMBL" id="CP000800">
    <property type="protein sequence ID" value="ABV18288.1"/>
    <property type="molecule type" value="Genomic_DNA"/>
</dbReference>
<dbReference type="RefSeq" id="WP_001158009.1">
    <property type="nucleotide sequence ID" value="NC_009801.1"/>
</dbReference>
<dbReference type="SMR" id="A7ZIR0"/>
<dbReference type="KEGG" id="ecw:EcE24377A_0540"/>
<dbReference type="HOGENOM" id="CLU_043456_1_0_6"/>
<dbReference type="Proteomes" id="UP000001122">
    <property type="component" value="Chromosome"/>
</dbReference>
<dbReference type="GO" id="GO:0016765">
    <property type="term" value="F:transferase activity, transferring alkyl or aryl (other than methyl) groups"/>
    <property type="evidence" value="ECO:0007669"/>
    <property type="project" value="UniProtKB-UniRule"/>
</dbReference>
<dbReference type="GO" id="GO:0043828">
    <property type="term" value="F:tRNA 2-selenouridine synthase activity"/>
    <property type="evidence" value="ECO:0007669"/>
    <property type="project" value="UniProtKB-EC"/>
</dbReference>
<dbReference type="GO" id="GO:0002098">
    <property type="term" value="P:tRNA wobble uridine modification"/>
    <property type="evidence" value="ECO:0007669"/>
    <property type="project" value="UniProtKB-UniRule"/>
</dbReference>
<dbReference type="CDD" id="cd01520">
    <property type="entry name" value="RHOD_YbbB"/>
    <property type="match status" value="1"/>
</dbReference>
<dbReference type="FunFam" id="3.40.250.10:FF:000009">
    <property type="entry name" value="tRNA 2-selenouridine/geranyl-2-thiouridine synthase"/>
    <property type="match status" value="1"/>
</dbReference>
<dbReference type="Gene3D" id="3.40.250.10">
    <property type="entry name" value="Rhodanese-like domain"/>
    <property type="match status" value="1"/>
</dbReference>
<dbReference type="HAMAP" id="MF_01622">
    <property type="entry name" value="tRNA_sel_U_synth"/>
    <property type="match status" value="1"/>
</dbReference>
<dbReference type="InterPro" id="IPR001763">
    <property type="entry name" value="Rhodanese-like_dom"/>
</dbReference>
<dbReference type="InterPro" id="IPR036873">
    <property type="entry name" value="Rhodanese-like_dom_sf"/>
</dbReference>
<dbReference type="InterPro" id="IPR017582">
    <property type="entry name" value="SelU"/>
</dbReference>
<dbReference type="NCBIfam" id="NF008749">
    <property type="entry name" value="PRK11784.1-1"/>
    <property type="match status" value="1"/>
</dbReference>
<dbReference type="NCBIfam" id="NF008751">
    <property type="entry name" value="PRK11784.1-3"/>
    <property type="match status" value="1"/>
</dbReference>
<dbReference type="NCBIfam" id="TIGR03167">
    <property type="entry name" value="tRNA_sel_U_synt"/>
    <property type="match status" value="1"/>
</dbReference>
<dbReference type="PANTHER" id="PTHR30401">
    <property type="entry name" value="TRNA 2-SELENOURIDINE SYNTHASE"/>
    <property type="match status" value="1"/>
</dbReference>
<dbReference type="PANTHER" id="PTHR30401:SF0">
    <property type="entry name" value="TRNA 2-SELENOURIDINE SYNTHASE"/>
    <property type="match status" value="1"/>
</dbReference>
<dbReference type="SMART" id="SM00450">
    <property type="entry name" value="RHOD"/>
    <property type="match status" value="1"/>
</dbReference>
<dbReference type="SUPFAM" id="SSF52821">
    <property type="entry name" value="Rhodanese/Cell cycle control phosphatase"/>
    <property type="match status" value="1"/>
</dbReference>
<dbReference type="PROSITE" id="PS50206">
    <property type="entry name" value="RHODANESE_3"/>
    <property type="match status" value="1"/>
</dbReference>
<reference key="1">
    <citation type="journal article" date="2008" name="J. Bacteriol.">
        <title>The pangenome structure of Escherichia coli: comparative genomic analysis of E. coli commensal and pathogenic isolates.</title>
        <authorList>
            <person name="Rasko D.A."/>
            <person name="Rosovitz M.J."/>
            <person name="Myers G.S.A."/>
            <person name="Mongodin E.F."/>
            <person name="Fricke W.F."/>
            <person name="Gajer P."/>
            <person name="Crabtree J."/>
            <person name="Sebaihia M."/>
            <person name="Thomson N.R."/>
            <person name="Chaudhuri R."/>
            <person name="Henderson I.R."/>
            <person name="Sperandio V."/>
            <person name="Ravel J."/>
        </authorList>
    </citation>
    <scope>NUCLEOTIDE SEQUENCE [LARGE SCALE GENOMIC DNA]</scope>
    <source>
        <strain>E24377A / ETEC</strain>
    </source>
</reference>
<name>SELU_ECO24</name>
<protein>
    <recommendedName>
        <fullName evidence="1">tRNA 2-selenouridine synthase</fullName>
        <ecNumber evidence="1">2.9.1.3</ecNumber>
    </recommendedName>
</protein>